<accession>Q8H129</accession>
<accession>Q8VYS7</accession>
<accession>Q9LQW0</accession>
<protein>
    <recommendedName>
        <fullName>Purple acid phosphatase 3</fullName>
        <ecNumber>3.1.3.2</ecNumber>
    </recommendedName>
</protein>
<evidence type="ECO:0000250" key="1"/>
<evidence type="ECO:0000255" key="2"/>
<evidence type="ECO:0000269" key="3">
    <source>
    </source>
</evidence>
<evidence type="ECO:0000305" key="4"/>
<organism>
    <name type="scientific">Arabidopsis thaliana</name>
    <name type="common">Mouse-ear cress</name>
    <dbReference type="NCBI Taxonomy" id="3702"/>
    <lineage>
        <taxon>Eukaryota</taxon>
        <taxon>Viridiplantae</taxon>
        <taxon>Streptophyta</taxon>
        <taxon>Embryophyta</taxon>
        <taxon>Tracheophyta</taxon>
        <taxon>Spermatophyta</taxon>
        <taxon>Magnoliopsida</taxon>
        <taxon>eudicotyledons</taxon>
        <taxon>Gunneridae</taxon>
        <taxon>Pentapetalae</taxon>
        <taxon>rosids</taxon>
        <taxon>malvids</taxon>
        <taxon>Brassicales</taxon>
        <taxon>Brassicaceae</taxon>
        <taxon>Camelineae</taxon>
        <taxon>Arabidopsis</taxon>
    </lineage>
</organism>
<gene>
    <name type="primary">PAP3</name>
    <name type="ordered locus">At1g14700</name>
    <name type="ORF">F10B6.10</name>
</gene>
<comment type="catalytic activity">
    <reaction>
        <text>a phosphate monoester + H2O = an alcohol + phosphate</text>
        <dbReference type="Rhea" id="RHEA:15017"/>
        <dbReference type="ChEBI" id="CHEBI:15377"/>
        <dbReference type="ChEBI" id="CHEBI:30879"/>
        <dbReference type="ChEBI" id="CHEBI:43474"/>
        <dbReference type="ChEBI" id="CHEBI:67140"/>
        <dbReference type="EC" id="3.1.3.2"/>
    </reaction>
</comment>
<comment type="cofactor">
    <cofactor evidence="1">
        <name>Fe cation</name>
        <dbReference type="ChEBI" id="CHEBI:24875"/>
    </cofactor>
    <text evidence="1">Binds 1 Fe cation per subunit.</text>
</comment>
<comment type="cofactor">
    <cofactor evidence="1">
        <name>Zn(2+)</name>
        <dbReference type="ChEBI" id="CHEBI:29105"/>
    </cofactor>
    <text evidence="1">Binds 1 zinc ion per subunit.</text>
</comment>
<comment type="subunit">
    <text evidence="1">Homodimer.</text>
</comment>
<comment type="subcellular location">
    <subcellularLocation>
        <location evidence="1">Secreted</location>
    </subcellularLocation>
</comment>
<comment type="alternative products">
    <event type="alternative splicing"/>
    <isoform>
        <id>Q8H129-1</id>
        <name>1</name>
        <sequence type="displayed"/>
    </isoform>
    <isoform>
        <id>Q8H129-2</id>
        <name>2</name>
        <sequence type="described" ref="VSP_037188"/>
    </isoform>
</comment>
<comment type="tissue specificity">
    <text evidence="3">Expressed in stems, leaves, flowers and siliques.</text>
</comment>
<comment type="similarity">
    <text evidence="4">Belongs to the metallophosphoesterase superfamily. Purple acid phosphatase family.</text>
</comment>
<keyword id="KW-0025">Alternative splicing</keyword>
<keyword id="KW-0325">Glycoprotein</keyword>
<keyword id="KW-0378">Hydrolase</keyword>
<keyword id="KW-0408">Iron</keyword>
<keyword id="KW-0479">Metal-binding</keyword>
<keyword id="KW-1185">Reference proteome</keyword>
<keyword id="KW-0677">Repeat</keyword>
<keyword id="KW-0964">Secreted</keyword>
<keyword id="KW-0732">Signal</keyword>
<keyword id="KW-0862">Zinc</keyword>
<name>PPA3_ARATH</name>
<reference key="1">
    <citation type="journal article" date="2005" name="Plant Mol. Biol.">
        <title>Expression patterns of purple acid phosphatase genes in Arabidopsis organs and functional analysis of AtPAP23 predominantly transcribed in flower.</title>
        <authorList>
            <person name="Zhu H."/>
            <person name="Qian W."/>
            <person name="Lu X."/>
            <person name="Li D."/>
            <person name="Liu X."/>
            <person name="Liu K."/>
            <person name="Wang D."/>
        </authorList>
    </citation>
    <scope>NUCLEOTIDE SEQUENCE [MRNA] (ISOFORM 1)</scope>
    <scope>TISSUE SPECIFICITY</scope>
    <source>
        <strain>cv. Columbia</strain>
    </source>
</reference>
<reference key="2">
    <citation type="journal article" date="2000" name="Nature">
        <title>Sequence and analysis of chromosome 1 of the plant Arabidopsis thaliana.</title>
        <authorList>
            <person name="Theologis A."/>
            <person name="Ecker J.R."/>
            <person name="Palm C.J."/>
            <person name="Federspiel N.A."/>
            <person name="Kaul S."/>
            <person name="White O."/>
            <person name="Alonso J."/>
            <person name="Altafi H."/>
            <person name="Araujo R."/>
            <person name="Bowman C.L."/>
            <person name="Brooks S.Y."/>
            <person name="Buehler E."/>
            <person name="Chan A."/>
            <person name="Chao Q."/>
            <person name="Chen H."/>
            <person name="Cheuk R.F."/>
            <person name="Chin C.W."/>
            <person name="Chung M.K."/>
            <person name="Conn L."/>
            <person name="Conway A.B."/>
            <person name="Conway A.R."/>
            <person name="Creasy T.H."/>
            <person name="Dewar K."/>
            <person name="Dunn P."/>
            <person name="Etgu P."/>
            <person name="Feldblyum T.V."/>
            <person name="Feng J.-D."/>
            <person name="Fong B."/>
            <person name="Fujii C.Y."/>
            <person name="Gill J.E."/>
            <person name="Goldsmith A.D."/>
            <person name="Haas B."/>
            <person name="Hansen N.F."/>
            <person name="Hughes B."/>
            <person name="Huizar L."/>
            <person name="Hunter J.L."/>
            <person name="Jenkins J."/>
            <person name="Johnson-Hopson C."/>
            <person name="Khan S."/>
            <person name="Khaykin E."/>
            <person name="Kim C.J."/>
            <person name="Koo H.L."/>
            <person name="Kremenetskaia I."/>
            <person name="Kurtz D.B."/>
            <person name="Kwan A."/>
            <person name="Lam B."/>
            <person name="Langin-Hooper S."/>
            <person name="Lee A."/>
            <person name="Lee J.M."/>
            <person name="Lenz C.A."/>
            <person name="Li J.H."/>
            <person name="Li Y.-P."/>
            <person name="Lin X."/>
            <person name="Liu S.X."/>
            <person name="Liu Z.A."/>
            <person name="Luros J.S."/>
            <person name="Maiti R."/>
            <person name="Marziali A."/>
            <person name="Militscher J."/>
            <person name="Miranda M."/>
            <person name="Nguyen M."/>
            <person name="Nierman W.C."/>
            <person name="Osborne B.I."/>
            <person name="Pai G."/>
            <person name="Peterson J."/>
            <person name="Pham P.K."/>
            <person name="Rizzo M."/>
            <person name="Rooney T."/>
            <person name="Rowley D."/>
            <person name="Sakano H."/>
            <person name="Salzberg S.L."/>
            <person name="Schwartz J.R."/>
            <person name="Shinn P."/>
            <person name="Southwick A.M."/>
            <person name="Sun H."/>
            <person name="Tallon L.J."/>
            <person name="Tambunga G."/>
            <person name="Toriumi M.J."/>
            <person name="Town C.D."/>
            <person name="Utterback T."/>
            <person name="Van Aken S."/>
            <person name="Vaysberg M."/>
            <person name="Vysotskaia V.S."/>
            <person name="Walker M."/>
            <person name="Wu D."/>
            <person name="Yu G."/>
            <person name="Fraser C.M."/>
            <person name="Venter J.C."/>
            <person name="Davis R.W."/>
        </authorList>
    </citation>
    <scope>NUCLEOTIDE SEQUENCE [LARGE SCALE GENOMIC DNA]</scope>
    <source>
        <strain>cv. Columbia</strain>
    </source>
</reference>
<reference key="3">
    <citation type="journal article" date="2017" name="Plant J.">
        <title>Araport11: a complete reannotation of the Arabidopsis thaliana reference genome.</title>
        <authorList>
            <person name="Cheng C.Y."/>
            <person name="Krishnakumar V."/>
            <person name="Chan A.P."/>
            <person name="Thibaud-Nissen F."/>
            <person name="Schobel S."/>
            <person name="Town C.D."/>
        </authorList>
    </citation>
    <scope>GENOME REANNOTATION</scope>
    <source>
        <strain>cv. Columbia</strain>
    </source>
</reference>
<reference key="4">
    <citation type="journal article" date="2003" name="Science">
        <title>Empirical analysis of transcriptional activity in the Arabidopsis genome.</title>
        <authorList>
            <person name="Yamada K."/>
            <person name="Lim J."/>
            <person name="Dale J.M."/>
            <person name="Chen H."/>
            <person name="Shinn P."/>
            <person name="Palm C.J."/>
            <person name="Southwick A.M."/>
            <person name="Wu H.C."/>
            <person name="Kim C.J."/>
            <person name="Nguyen M."/>
            <person name="Pham P.K."/>
            <person name="Cheuk R.F."/>
            <person name="Karlin-Newmann G."/>
            <person name="Liu S.X."/>
            <person name="Lam B."/>
            <person name="Sakano H."/>
            <person name="Wu T."/>
            <person name="Yu G."/>
            <person name="Miranda M."/>
            <person name="Quach H.L."/>
            <person name="Tripp M."/>
            <person name="Chang C.H."/>
            <person name="Lee J.M."/>
            <person name="Toriumi M.J."/>
            <person name="Chan M.M."/>
            <person name="Tang C.C."/>
            <person name="Onodera C.S."/>
            <person name="Deng J.M."/>
            <person name="Akiyama K."/>
            <person name="Ansari Y."/>
            <person name="Arakawa T."/>
            <person name="Banh J."/>
            <person name="Banno F."/>
            <person name="Bowser L."/>
            <person name="Brooks S.Y."/>
            <person name="Carninci P."/>
            <person name="Chao Q."/>
            <person name="Choy N."/>
            <person name="Enju A."/>
            <person name="Goldsmith A.D."/>
            <person name="Gurjal M."/>
            <person name="Hansen N.F."/>
            <person name="Hayashizaki Y."/>
            <person name="Johnson-Hopson C."/>
            <person name="Hsuan V.W."/>
            <person name="Iida K."/>
            <person name="Karnes M."/>
            <person name="Khan S."/>
            <person name="Koesema E."/>
            <person name="Ishida J."/>
            <person name="Jiang P.X."/>
            <person name="Jones T."/>
            <person name="Kawai J."/>
            <person name="Kamiya A."/>
            <person name="Meyers C."/>
            <person name="Nakajima M."/>
            <person name="Narusaka M."/>
            <person name="Seki M."/>
            <person name="Sakurai T."/>
            <person name="Satou M."/>
            <person name="Tamse R."/>
            <person name="Vaysberg M."/>
            <person name="Wallender E.K."/>
            <person name="Wong C."/>
            <person name="Yamamura Y."/>
            <person name="Yuan S."/>
            <person name="Shinozaki K."/>
            <person name="Davis R.W."/>
            <person name="Theologis A."/>
            <person name="Ecker J.R."/>
        </authorList>
    </citation>
    <scope>NUCLEOTIDE SEQUENCE [LARGE SCALE MRNA] (ISOFORM 1)</scope>
    <source>
        <strain>cv. Columbia</strain>
    </source>
</reference>
<reference key="5">
    <citation type="journal article" date="2002" name="J. Biol. Chem.">
        <title>Purple acid phosphatases of Arabidopsis thaliana. Comparative analysis and differential regulation by phosphate deprivation.</title>
        <authorList>
            <person name="Li D."/>
            <person name="Zhu H."/>
            <person name="Liu K."/>
            <person name="Liu X."/>
            <person name="Leggewie G."/>
            <person name="Udvardi M."/>
            <person name="Wang D."/>
        </authorList>
    </citation>
    <scope>GENE FAMILY</scope>
    <scope>NOMENCLATURE</scope>
</reference>
<feature type="signal peptide" evidence="2">
    <location>
        <begin position="1"/>
        <end position="32"/>
    </location>
</feature>
<feature type="chain" id="PRO_0000372808" description="Purple acid phosphatase 3">
    <location>
        <begin position="33"/>
        <end position="366"/>
    </location>
</feature>
<feature type="active site" description="Proton donor" evidence="1">
    <location>
        <position position="255"/>
    </location>
</feature>
<feature type="binding site" evidence="1">
    <location>
        <position position="81"/>
    </location>
    <ligand>
        <name>Fe cation</name>
        <dbReference type="ChEBI" id="CHEBI:24875"/>
    </ligand>
</feature>
<feature type="binding site" evidence="1">
    <location>
        <position position="114"/>
    </location>
    <ligand>
        <name>Fe cation</name>
        <dbReference type="ChEBI" id="CHEBI:24875"/>
    </ligand>
</feature>
<feature type="binding site" evidence="1">
    <location>
        <position position="114"/>
    </location>
    <ligand>
        <name>Zn(2+)</name>
        <dbReference type="ChEBI" id="CHEBI:29105"/>
    </ligand>
</feature>
<feature type="binding site" evidence="1">
    <location>
        <position position="117"/>
    </location>
    <ligand>
        <name>Fe cation</name>
        <dbReference type="ChEBI" id="CHEBI:24875"/>
    </ligand>
</feature>
<feature type="binding site" evidence="1">
    <location>
        <position position="152"/>
    </location>
    <ligand>
        <name>Zn(2+)</name>
        <dbReference type="ChEBI" id="CHEBI:29105"/>
    </ligand>
</feature>
<feature type="binding site" evidence="1">
    <location>
        <position position="246"/>
    </location>
    <ligand>
        <name>Zn(2+)</name>
        <dbReference type="ChEBI" id="CHEBI:29105"/>
    </ligand>
</feature>
<feature type="binding site" evidence="1">
    <location>
        <begin position="281"/>
        <end position="283"/>
    </location>
    <ligand>
        <name>substrate</name>
    </ligand>
</feature>
<feature type="binding site" evidence="1">
    <location>
        <position position="281"/>
    </location>
    <ligand>
        <name>Zn(2+)</name>
        <dbReference type="ChEBI" id="CHEBI:29105"/>
    </ligand>
</feature>
<feature type="binding site" evidence="1">
    <location>
        <position position="283"/>
    </location>
    <ligand>
        <name>Fe cation</name>
        <dbReference type="ChEBI" id="CHEBI:24875"/>
    </ligand>
</feature>
<feature type="glycosylation site" description="N-linked (GlcNAc...) asparagine" evidence="2">
    <location>
        <position position="89"/>
    </location>
</feature>
<feature type="splice variant" id="VSP_037188" description="In isoform 2." evidence="4">
    <location>
        <begin position="149"/>
        <end position="150"/>
    </location>
</feature>
<dbReference type="EC" id="3.1.3.2"/>
<dbReference type="EMBL" id="AY686599">
    <property type="protein sequence ID" value="AAT95435.1"/>
    <property type="molecule type" value="mRNA"/>
</dbReference>
<dbReference type="EMBL" id="AC006917">
    <property type="protein sequence ID" value="AAF79221.1"/>
    <property type="molecule type" value="Genomic_DNA"/>
</dbReference>
<dbReference type="EMBL" id="CP002684">
    <property type="protein sequence ID" value="AEE29210.1"/>
    <property type="molecule type" value="Genomic_DNA"/>
</dbReference>
<dbReference type="EMBL" id="CP002684">
    <property type="protein sequence ID" value="AEE29211.1"/>
    <property type="molecule type" value="Genomic_DNA"/>
</dbReference>
<dbReference type="EMBL" id="AY070051">
    <property type="protein sequence ID" value="AAL49808.2"/>
    <property type="molecule type" value="mRNA"/>
</dbReference>
<dbReference type="EMBL" id="BT000877">
    <property type="protein sequence ID" value="AAN41277.1"/>
    <property type="molecule type" value="mRNA"/>
</dbReference>
<dbReference type="PIR" id="D86281">
    <property type="entry name" value="D86281"/>
</dbReference>
<dbReference type="RefSeq" id="NP_001077538.1">
    <molecule id="Q8H129-2"/>
    <property type="nucleotide sequence ID" value="NM_001084069.1"/>
</dbReference>
<dbReference type="RefSeq" id="NP_172923.3">
    <molecule id="Q8H129-1"/>
    <property type="nucleotide sequence ID" value="NM_101339.5"/>
</dbReference>
<dbReference type="SMR" id="Q8H129"/>
<dbReference type="BioGRID" id="23275">
    <property type="interactions" value="123"/>
</dbReference>
<dbReference type="FunCoup" id="Q8H129">
    <property type="interactions" value="409"/>
</dbReference>
<dbReference type="IntAct" id="Q8H129">
    <property type="interactions" value="122"/>
</dbReference>
<dbReference type="STRING" id="3702.Q8H129"/>
<dbReference type="GlyCosmos" id="Q8H129">
    <property type="glycosylation" value="1 site, No reported glycans"/>
</dbReference>
<dbReference type="GlyGen" id="Q8H129">
    <property type="glycosylation" value="1 site"/>
</dbReference>
<dbReference type="iPTMnet" id="Q8H129"/>
<dbReference type="PaxDb" id="3702-AT1G14700.1"/>
<dbReference type="ProteomicsDB" id="250550">
    <molecule id="Q8H129-1"/>
</dbReference>
<dbReference type="EnsemblPlants" id="AT1G14700.1">
    <molecule id="Q8H129-1"/>
    <property type="protein sequence ID" value="AT1G14700.1"/>
    <property type="gene ID" value="AT1G14700"/>
</dbReference>
<dbReference type="EnsemblPlants" id="AT1G14700.2">
    <molecule id="Q8H129-2"/>
    <property type="protein sequence ID" value="AT1G14700.2"/>
    <property type="gene ID" value="AT1G14700"/>
</dbReference>
<dbReference type="GeneID" id="838035"/>
<dbReference type="Gramene" id="AT1G14700.1">
    <molecule id="Q8H129-1"/>
    <property type="protein sequence ID" value="AT1G14700.1"/>
    <property type="gene ID" value="AT1G14700"/>
</dbReference>
<dbReference type="Gramene" id="AT1G14700.2">
    <molecule id="Q8H129-2"/>
    <property type="protein sequence ID" value="AT1G14700.2"/>
    <property type="gene ID" value="AT1G14700"/>
</dbReference>
<dbReference type="KEGG" id="ath:AT1G14700"/>
<dbReference type="Araport" id="AT1G14700"/>
<dbReference type="TAIR" id="AT1G14700">
    <property type="gene designation" value="PAP3"/>
</dbReference>
<dbReference type="eggNOG" id="KOG2679">
    <property type="taxonomic scope" value="Eukaryota"/>
</dbReference>
<dbReference type="HOGENOM" id="CLU_043332_3_0_1"/>
<dbReference type="InParanoid" id="Q8H129"/>
<dbReference type="OMA" id="QVPWYIV"/>
<dbReference type="PhylomeDB" id="Q8H129"/>
<dbReference type="BioCyc" id="ARA:AT1G14700-MONOMER"/>
<dbReference type="PRO" id="PR:Q8H129"/>
<dbReference type="Proteomes" id="UP000006548">
    <property type="component" value="Chromosome 1"/>
</dbReference>
<dbReference type="ExpressionAtlas" id="Q8H129">
    <property type="expression patterns" value="baseline and differential"/>
</dbReference>
<dbReference type="GO" id="GO:0005576">
    <property type="term" value="C:extracellular region"/>
    <property type="evidence" value="ECO:0007669"/>
    <property type="project" value="UniProtKB-SubCell"/>
</dbReference>
<dbReference type="GO" id="GO:0000325">
    <property type="term" value="C:plant-type vacuole"/>
    <property type="evidence" value="ECO:0007005"/>
    <property type="project" value="TAIR"/>
</dbReference>
<dbReference type="GO" id="GO:0003993">
    <property type="term" value="F:acid phosphatase activity"/>
    <property type="evidence" value="ECO:0000250"/>
    <property type="project" value="TAIR"/>
</dbReference>
<dbReference type="GO" id="GO:0046872">
    <property type="term" value="F:metal ion binding"/>
    <property type="evidence" value="ECO:0007669"/>
    <property type="project" value="UniProtKB-KW"/>
</dbReference>
<dbReference type="CDD" id="cd07378">
    <property type="entry name" value="MPP_ACP5"/>
    <property type="match status" value="1"/>
</dbReference>
<dbReference type="FunFam" id="3.60.21.10:FF:000027">
    <property type="entry name" value="Purple acid phosphatase"/>
    <property type="match status" value="1"/>
</dbReference>
<dbReference type="Gene3D" id="3.60.21.10">
    <property type="match status" value="1"/>
</dbReference>
<dbReference type="InterPro" id="IPR024927">
    <property type="entry name" value="Acid_PPase"/>
</dbReference>
<dbReference type="InterPro" id="IPR004843">
    <property type="entry name" value="Calcineurin-like_PHP_ApaH"/>
</dbReference>
<dbReference type="InterPro" id="IPR029052">
    <property type="entry name" value="Metallo-depent_PP-like"/>
</dbReference>
<dbReference type="InterPro" id="IPR051558">
    <property type="entry name" value="Metallophosphoesterase_PAP"/>
</dbReference>
<dbReference type="PANTHER" id="PTHR10161:SF36">
    <property type="entry name" value="PURPLE ACID PHOSPHATASE 3"/>
    <property type="match status" value="1"/>
</dbReference>
<dbReference type="PANTHER" id="PTHR10161">
    <property type="entry name" value="TARTRATE-RESISTANT ACID PHOSPHATASE TYPE 5"/>
    <property type="match status" value="1"/>
</dbReference>
<dbReference type="Pfam" id="PF00149">
    <property type="entry name" value="Metallophos"/>
    <property type="match status" value="1"/>
</dbReference>
<dbReference type="PIRSF" id="PIRSF000898">
    <property type="entry name" value="Acid_Ptase_5"/>
    <property type="match status" value="1"/>
</dbReference>
<dbReference type="SUPFAM" id="SSF56300">
    <property type="entry name" value="Metallo-dependent phosphatases"/>
    <property type="match status" value="1"/>
</dbReference>
<proteinExistence type="evidence at transcript level"/>
<sequence>MTYIYRDTKITTKSTIPFLIFFLFCFSNLSMATLKHKPVNLVFYVYNLIIIFSSHSSTAELRRLLQPSKTDGTVSFLVIGDWGRRGSYNQSQVALQMGEIGEKLDIDFVISTGDNFYDNGLTSLHDPLFQDSFTNIYTAPSLQKPWYSVLGNHDYRGDVRAQLSPMLRALDNRWVCMRSFIVNAEIVDLFFVDTTPFVDKYFIQPNKHVYDWSGVLPRQTYLNNLLKELDVALRESVAKWKIVIGHHTIKSAGHHGNTIELEKHLLPILQANEVDLYVNGHDHCLEHISSVDSNIQFMTSGGGSKAWKGGDVNYVEPEEMRFYYDGQGFMSVHVSEAELRVVFYDVFGHVLHHWKKTYKEALYFAS</sequence>